<protein>
    <recommendedName>
        <fullName>Pectate lyase H</fullName>
        <ecNumber>4.2.2.2</ecNumber>
    </recommendedName>
</protein>
<comment type="function">
    <text evidence="3">Pectinolytic enzyme consist of four classes of enzymes: pectin lyase, polygalacturonase, pectin methylesterase and rhamnogalacturonase. Among pectinolytic enzymes, pectin lyase is the most important in depolymerization of pectin, since it cleaves internal glycosidic bonds of highly methylated pectins. Favors pectate, the anion, over pectin, the methyl ester.</text>
</comment>
<comment type="catalytic activity">
    <reaction>
        <text>Eliminative cleavage of (1-&gt;4)-alpha-D-galacturonan to give oligosaccharides with 4-deoxy-alpha-D-galact-4-enuronosyl groups at their non-reducing ends.</text>
        <dbReference type="EC" id="4.2.2.2"/>
    </reaction>
</comment>
<comment type="cofactor">
    <cofactor evidence="1">
        <name>Ca(2+)</name>
        <dbReference type="ChEBI" id="CHEBI:29108"/>
    </cofactor>
    <text evidence="1">Binds 1 Ca(2+) ion per subunit.</text>
</comment>
<comment type="biophysicochemical properties">
    <phDependence>
        <text evidence="3">Optimum pH is 7.8.</text>
    </phDependence>
    <temperatureDependence>
        <text evidence="3">Optimum temperature is 22 degrees Celsius.</text>
    </temperatureDependence>
</comment>
<comment type="subcellular location">
    <subcellularLocation>
        <location evidence="4">Secreted</location>
    </subcellularLocation>
</comment>
<comment type="similarity">
    <text evidence="4">Belongs to the polysaccharide lyase 3 family.</text>
</comment>
<reference key="1">
    <citation type="journal article" date="2006" name="Proc. Natl. Acad. Sci. U.S.A.">
        <title>Development and application of a suite of polysaccharide-degrading enzymes for analyzing plant cell walls.</title>
        <authorList>
            <person name="Bauer S."/>
            <person name="Vasu P."/>
            <person name="Persson S."/>
            <person name="Mort A.J."/>
            <person name="Somerville C.R."/>
        </authorList>
    </citation>
    <scope>NUCLEOTIDE SEQUENCE [MRNA]</scope>
    <scope>FUNCTION</scope>
    <scope>BIOPHYSICOCHEMICAL PROPERTIES</scope>
    <source>
        <strain>FGSC A4 / ATCC 38163 / CBS 112.46 / NRRL 194 / M139</strain>
    </source>
</reference>
<reference key="2">
    <citation type="journal article" date="2005" name="Nature">
        <title>Sequencing of Aspergillus nidulans and comparative analysis with A. fumigatus and A. oryzae.</title>
        <authorList>
            <person name="Galagan J.E."/>
            <person name="Calvo S.E."/>
            <person name="Cuomo C."/>
            <person name="Ma L.-J."/>
            <person name="Wortman J.R."/>
            <person name="Batzoglou S."/>
            <person name="Lee S.-I."/>
            <person name="Bastuerkmen M."/>
            <person name="Spevak C.C."/>
            <person name="Clutterbuck J."/>
            <person name="Kapitonov V."/>
            <person name="Jurka J."/>
            <person name="Scazzocchio C."/>
            <person name="Farman M.L."/>
            <person name="Butler J."/>
            <person name="Purcell S."/>
            <person name="Harris S."/>
            <person name="Braus G.H."/>
            <person name="Draht O."/>
            <person name="Busch S."/>
            <person name="D'Enfert C."/>
            <person name="Bouchier C."/>
            <person name="Goldman G.H."/>
            <person name="Bell-Pedersen D."/>
            <person name="Griffiths-Jones S."/>
            <person name="Doonan J.H."/>
            <person name="Yu J."/>
            <person name="Vienken K."/>
            <person name="Pain A."/>
            <person name="Freitag M."/>
            <person name="Selker E.U."/>
            <person name="Archer D.B."/>
            <person name="Penalva M.A."/>
            <person name="Oakley B.R."/>
            <person name="Momany M."/>
            <person name="Tanaka T."/>
            <person name="Kumagai T."/>
            <person name="Asai K."/>
            <person name="Machida M."/>
            <person name="Nierman W.C."/>
            <person name="Denning D.W."/>
            <person name="Caddick M.X."/>
            <person name="Hynes M."/>
            <person name="Paoletti M."/>
            <person name="Fischer R."/>
            <person name="Miller B.L."/>
            <person name="Dyer P.S."/>
            <person name="Sachs M.S."/>
            <person name="Osmani S.A."/>
            <person name="Birren B.W."/>
        </authorList>
    </citation>
    <scope>NUCLEOTIDE SEQUENCE [LARGE SCALE GENOMIC DNA]</scope>
    <source>
        <strain>FGSC A4 / ATCC 38163 / CBS 112.46 / NRRL 194 / M139</strain>
    </source>
</reference>
<reference key="3">
    <citation type="journal article" date="2009" name="Fungal Genet. Biol.">
        <title>The 2008 update of the Aspergillus nidulans genome annotation: a community effort.</title>
        <authorList>
            <person name="Wortman J.R."/>
            <person name="Gilsenan J.M."/>
            <person name="Joardar V."/>
            <person name="Deegan J."/>
            <person name="Clutterbuck J."/>
            <person name="Andersen M.R."/>
            <person name="Archer D."/>
            <person name="Bencina M."/>
            <person name="Braus G."/>
            <person name="Coutinho P."/>
            <person name="von Dohren H."/>
            <person name="Doonan J."/>
            <person name="Driessen A.J."/>
            <person name="Durek P."/>
            <person name="Espeso E."/>
            <person name="Fekete E."/>
            <person name="Flipphi M."/>
            <person name="Estrada C.G."/>
            <person name="Geysens S."/>
            <person name="Goldman G."/>
            <person name="de Groot P.W."/>
            <person name="Hansen K."/>
            <person name="Harris S.D."/>
            <person name="Heinekamp T."/>
            <person name="Helmstaedt K."/>
            <person name="Henrissat B."/>
            <person name="Hofmann G."/>
            <person name="Homan T."/>
            <person name="Horio T."/>
            <person name="Horiuchi H."/>
            <person name="James S."/>
            <person name="Jones M."/>
            <person name="Karaffa L."/>
            <person name="Karanyi Z."/>
            <person name="Kato M."/>
            <person name="Keller N."/>
            <person name="Kelly D.E."/>
            <person name="Kiel J.A."/>
            <person name="Kim J.M."/>
            <person name="van der Klei I.J."/>
            <person name="Klis F.M."/>
            <person name="Kovalchuk A."/>
            <person name="Krasevec N."/>
            <person name="Kubicek C.P."/>
            <person name="Liu B."/>
            <person name="Maccabe A."/>
            <person name="Meyer V."/>
            <person name="Mirabito P."/>
            <person name="Miskei M."/>
            <person name="Mos M."/>
            <person name="Mullins J."/>
            <person name="Nelson D.R."/>
            <person name="Nielsen J."/>
            <person name="Oakley B.R."/>
            <person name="Osmani S.A."/>
            <person name="Pakula T."/>
            <person name="Paszewski A."/>
            <person name="Paulsen I."/>
            <person name="Pilsyk S."/>
            <person name="Pocsi I."/>
            <person name="Punt P.J."/>
            <person name="Ram A.F."/>
            <person name="Ren Q."/>
            <person name="Robellet X."/>
            <person name="Robson G."/>
            <person name="Seiboth B."/>
            <person name="van Solingen P."/>
            <person name="Specht T."/>
            <person name="Sun J."/>
            <person name="Taheri-Talesh N."/>
            <person name="Takeshita N."/>
            <person name="Ussery D."/>
            <person name="vanKuyk P.A."/>
            <person name="Visser H."/>
            <person name="van de Vondervoort P.J."/>
            <person name="de Vries R.P."/>
            <person name="Walton J."/>
            <person name="Xiang X."/>
            <person name="Xiong Y."/>
            <person name="Zeng A.P."/>
            <person name="Brandt B.W."/>
            <person name="Cornell M.J."/>
            <person name="van den Hondel C.A."/>
            <person name="Visser J."/>
            <person name="Oliver S.G."/>
            <person name="Turner G."/>
        </authorList>
    </citation>
    <scope>GENOME REANNOTATION</scope>
    <source>
        <strain>FGSC A4 / ATCC 38163 / CBS 112.46 / NRRL 194 / M139</strain>
    </source>
</reference>
<feature type="signal peptide" evidence="2">
    <location>
        <begin position="1"/>
        <end position="17"/>
    </location>
</feature>
<feature type="chain" id="PRO_0000394595" description="Pectate lyase H">
    <location>
        <begin position="18"/>
        <end position="260"/>
    </location>
</feature>
<name>PLYH_EMENI</name>
<sequence length="260" mass="27511">MFIKNGLLLSLATSVLATHGARSHSQAATSKLSKRFTFPIPNSEGSVTLDEVYEIDGETFDGGMKTYGRGVSCTGQDEGGDSDAVFIVKNGGTLKNVIIGSDQIEGVHCEGSCTIENVWWEAVCEDALSLKTGDGPFNVVGGGAQGADDKVIQHNGGGTVSISDFTVYDFGKLYRSCGNCGDQYERHVVIEGVTAVDGKYLVGINSNYGDTATIDSATCATDVKTICAEYKGTDNNDEEPEEVSDGPSDYCIYTEPLSEC</sequence>
<dbReference type="EC" id="4.2.2.2"/>
<dbReference type="EMBL" id="DQ490518">
    <property type="protein sequence ID" value="ABF50894.1"/>
    <property type="molecule type" value="mRNA"/>
</dbReference>
<dbReference type="EMBL" id="AACD01000153">
    <property type="protein sequence ID" value="EAA67075.1"/>
    <property type="molecule type" value="Genomic_DNA"/>
</dbReference>
<dbReference type="EMBL" id="BN001305">
    <property type="protein sequence ID" value="CBF80586.1"/>
    <property type="molecule type" value="Genomic_DNA"/>
</dbReference>
<dbReference type="RefSeq" id="XP_681722.1">
    <property type="nucleotide sequence ID" value="XM_676630.1"/>
</dbReference>
<dbReference type="SMR" id="Q5ATC7"/>
<dbReference type="STRING" id="227321.Q5ATC7"/>
<dbReference type="CAZy" id="PL3">
    <property type="family name" value="Polysaccharide Lyase Family 3"/>
</dbReference>
<dbReference type="EnsemblFungi" id="CBF80586">
    <property type="protein sequence ID" value="CBF80586"/>
    <property type="gene ID" value="ANIA_08453"/>
</dbReference>
<dbReference type="KEGG" id="ani:ANIA_08453"/>
<dbReference type="VEuPathDB" id="FungiDB:AN8453"/>
<dbReference type="eggNOG" id="ENOG502RYK9">
    <property type="taxonomic scope" value="Eukaryota"/>
</dbReference>
<dbReference type="HOGENOM" id="CLU_044863_3_0_1"/>
<dbReference type="InParanoid" id="Q5ATC7"/>
<dbReference type="OMA" id="YDRGTEC"/>
<dbReference type="OrthoDB" id="441042at2759"/>
<dbReference type="BRENDA" id="4.2.2.2">
    <property type="organism ID" value="517"/>
</dbReference>
<dbReference type="Proteomes" id="UP000000560">
    <property type="component" value="Chromosome V"/>
</dbReference>
<dbReference type="GO" id="GO:0005576">
    <property type="term" value="C:extracellular region"/>
    <property type="evidence" value="ECO:0007669"/>
    <property type="project" value="UniProtKB-SubCell"/>
</dbReference>
<dbReference type="GO" id="GO:0030570">
    <property type="term" value="F:pectate lyase activity"/>
    <property type="evidence" value="ECO:0000314"/>
    <property type="project" value="UniProtKB"/>
</dbReference>
<dbReference type="GO" id="GO:0071555">
    <property type="term" value="P:cell wall organization"/>
    <property type="evidence" value="ECO:0007669"/>
    <property type="project" value="UniProtKB-KW"/>
</dbReference>
<dbReference type="GO" id="GO:0045490">
    <property type="term" value="P:pectin catabolic process"/>
    <property type="evidence" value="ECO:0000314"/>
    <property type="project" value="UniProtKB"/>
</dbReference>
<dbReference type="FunFam" id="2.160.20.10:FF:000044">
    <property type="entry name" value="Pectate lyase E"/>
    <property type="match status" value="1"/>
</dbReference>
<dbReference type="Gene3D" id="2.160.20.10">
    <property type="entry name" value="Single-stranded right-handed beta-helix, Pectin lyase-like"/>
    <property type="match status" value="1"/>
</dbReference>
<dbReference type="InterPro" id="IPR004898">
    <property type="entry name" value="Pectate_lyase_PlyH/PlyE-like"/>
</dbReference>
<dbReference type="InterPro" id="IPR012334">
    <property type="entry name" value="Pectin_lyas_fold"/>
</dbReference>
<dbReference type="InterPro" id="IPR011050">
    <property type="entry name" value="Pectin_lyase_fold/virulence"/>
</dbReference>
<dbReference type="PANTHER" id="PTHR33407">
    <property type="entry name" value="PECTATE LYASE F-RELATED"/>
    <property type="match status" value="1"/>
</dbReference>
<dbReference type="PANTHER" id="PTHR33407:SF11">
    <property type="entry name" value="PECTATE LYASE H-RELATED"/>
    <property type="match status" value="1"/>
</dbReference>
<dbReference type="Pfam" id="PF03211">
    <property type="entry name" value="Pectate_lyase"/>
    <property type="match status" value="1"/>
</dbReference>
<dbReference type="SUPFAM" id="SSF51126">
    <property type="entry name" value="Pectin lyase-like"/>
    <property type="match status" value="1"/>
</dbReference>
<accession>Q5ATC7</accession>
<accession>C8VEG5</accession>
<accession>Q1HFQ6</accession>
<keyword id="KW-0106">Calcium</keyword>
<keyword id="KW-0119">Carbohydrate metabolism</keyword>
<keyword id="KW-0961">Cell wall biogenesis/degradation</keyword>
<keyword id="KW-0456">Lyase</keyword>
<keyword id="KW-0624">Polysaccharide degradation</keyword>
<keyword id="KW-1185">Reference proteome</keyword>
<keyword id="KW-0964">Secreted</keyword>
<keyword id="KW-0732">Signal</keyword>
<gene>
    <name type="primary">plyH</name>
    <name type="ORF">AN8453</name>
</gene>
<organism>
    <name type="scientific">Emericella nidulans (strain FGSC A4 / ATCC 38163 / CBS 112.46 / NRRL 194 / M139)</name>
    <name type="common">Aspergillus nidulans</name>
    <dbReference type="NCBI Taxonomy" id="227321"/>
    <lineage>
        <taxon>Eukaryota</taxon>
        <taxon>Fungi</taxon>
        <taxon>Dikarya</taxon>
        <taxon>Ascomycota</taxon>
        <taxon>Pezizomycotina</taxon>
        <taxon>Eurotiomycetes</taxon>
        <taxon>Eurotiomycetidae</taxon>
        <taxon>Eurotiales</taxon>
        <taxon>Aspergillaceae</taxon>
        <taxon>Aspergillus</taxon>
        <taxon>Aspergillus subgen. Nidulantes</taxon>
    </lineage>
</organism>
<evidence type="ECO:0000250" key="1"/>
<evidence type="ECO:0000255" key="2"/>
<evidence type="ECO:0000269" key="3">
    <source>
    </source>
</evidence>
<evidence type="ECO:0000305" key="4"/>
<proteinExistence type="evidence at protein level"/>